<comment type="function">
    <text evidence="3">Catalyzes the hydrolysis of both aliphatic and aromatic N-carbamoyl-L-alpha-amino acids to free L-alpha-amino acids. Is strictly L-specific since it is inactive toward N-carbamoyl-D-alpha-amino acids. Is also able to hydrolyze N-formyl-L-methionine and N-acetyl-L-methionine, but not ureidosuccinate or 3-ureidopropanoate.</text>
</comment>
<comment type="catalytic activity">
    <reaction evidence="3">
        <text>an N-carbamoyl-L-alpha-amino acid + H2O + 2 H(+) = an L-alpha-amino acid + NH4(+) + CO2</text>
        <dbReference type="Rhea" id="RHEA:17581"/>
        <dbReference type="ChEBI" id="CHEBI:15377"/>
        <dbReference type="ChEBI" id="CHEBI:15378"/>
        <dbReference type="ChEBI" id="CHEBI:16526"/>
        <dbReference type="ChEBI" id="CHEBI:28938"/>
        <dbReference type="ChEBI" id="CHEBI:58865"/>
        <dbReference type="ChEBI" id="CHEBI:59869"/>
        <dbReference type="EC" id="3.5.1.87"/>
    </reaction>
    <physiologicalReaction direction="left-to-right" evidence="8">
        <dbReference type="Rhea" id="RHEA:17582"/>
    </physiologicalReaction>
</comment>
<comment type="catalytic activity">
    <reaction evidence="3">
        <text>N-carbamoyl-L-methionine + H2O + 2 H(+) = L-methionine + NH4(+) + CO2</text>
        <dbReference type="Rhea" id="RHEA:72783"/>
        <dbReference type="ChEBI" id="CHEBI:15377"/>
        <dbReference type="ChEBI" id="CHEBI:15378"/>
        <dbReference type="ChEBI" id="CHEBI:16526"/>
        <dbReference type="ChEBI" id="CHEBI:28938"/>
        <dbReference type="ChEBI" id="CHEBI:57844"/>
        <dbReference type="ChEBI" id="CHEBI:137116"/>
    </reaction>
    <physiologicalReaction direction="left-to-right" evidence="8">
        <dbReference type="Rhea" id="RHEA:72784"/>
    </physiologicalReaction>
</comment>
<comment type="catalytic activity">
    <reaction evidence="3">
        <text>N-acetyl-L-methionine + H2O = L-methionine + acetate</text>
        <dbReference type="Rhea" id="RHEA:67440"/>
        <dbReference type="ChEBI" id="CHEBI:15377"/>
        <dbReference type="ChEBI" id="CHEBI:30089"/>
        <dbReference type="ChEBI" id="CHEBI:57844"/>
        <dbReference type="ChEBI" id="CHEBI:71670"/>
    </reaction>
    <physiologicalReaction direction="left-to-right" evidence="8">
        <dbReference type="Rhea" id="RHEA:67441"/>
    </physiologicalReaction>
</comment>
<comment type="catalytic activity">
    <reaction evidence="3">
        <text>N(alpha)-formyl-L-methionine + H2O = formate + L-methionine</text>
        <dbReference type="Rhea" id="RHEA:17781"/>
        <dbReference type="ChEBI" id="CHEBI:15377"/>
        <dbReference type="ChEBI" id="CHEBI:15740"/>
        <dbReference type="ChEBI" id="CHEBI:57809"/>
        <dbReference type="ChEBI" id="CHEBI:57844"/>
    </reaction>
    <physiologicalReaction direction="left-to-right" evidence="8">
        <dbReference type="Rhea" id="RHEA:17782"/>
    </physiologicalReaction>
</comment>
<comment type="catalytic activity">
    <reaction evidence="3">
        <text>N-carbamoyl-L-alanine + H2O + 2 H(+) = L-alanine + NH4(+) + CO2</text>
        <dbReference type="Rhea" id="RHEA:72827"/>
        <dbReference type="ChEBI" id="CHEBI:15377"/>
        <dbReference type="ChEBI" id="CHEBI:15378"/>
        <dbReference type="ChEBI" id="CHEBI:16526"/>
        <dbReference type="ChEBI" id="CHEBI:28938"/>
        <dbReference type="ChEBI" id="CHEBI:57972"/>
        <dbReference type="ChEBI" id="CHEBI:192535"/>
    </reaction>
    <physiologicalReaction direction="left-to-right" evidence="8">
        <dbReference type="Rhea" id="RHEA:72828"/>
    </physiologicalReaction>
</comment>
<comment type="catalytic activity">
    <reaction evidence="3">
        <text>N-carbamoyl-L-cysteine + H2O + 2 H(+) = L-cysteine + NH4(+) + CO2</text>
        <dbReference type="Rhea" id="RHEA:72787"/>
        <dbReference type="ChEBI" id="CHEBI:15377"/>
        <dbReference type="ChEBI" id="CHEBI:15378"/>
        <dbReference type="ChEBI" id="CHEBI:16526"/>
        <dbReference type="ChEBI" id="CHEBI:28938"/>
        <dbReference type="ChEBI" id="CHEBI:35235"/>
        <dbReference type="ChEBI" id="CHEBI:64772"/>
    </reaction>
    <physiologicalReaction direction="left-to-right" evidence="8">
        <dbReference type="Rhea" id="RHEA:72788"/>
    </physiologicalReaction>
</comment>
<comment type="catalytic activity">
    <reaction evidence="3">
        <text>N-carbamoyl-L-tryptophan + H2O + 2 H(+) = L-tryptophan + NH4(+) + CO2</text>
        <dbReference type="Rhea" id="RHEA:72823"/>
        <dbReference type="ChEBI" id="CHEBI:15377"/>
        <dbReference type="ChEBI" id="CHEBI:15378"/>
        <dbReference type="ChEBI" id="CHEBI:16526"/>
        <dbReference type="ChEBI" id="CHEBI:28938"/>
        <dbReference type="ChEBI" id="CHEBI:57912"/>
        <dbReference type="ChEBI" id="CHEBI:192534"/>
    </reaction>
    <physiologicalReaction direction="left-to-right" evidence="8">
        <dbReference type="Rhea" id="RHEA:72824"/>
    </physiologicalReaction>
</comment>
<comment type="catalytic activity">
    <reaction evidence="3">
        <text>N-carbamoyl-L-valine + H2O + 2 H(+) = L-valine + NH4(+) + CO2</text>
        <dbReference type="Rhea" id="RHEA:83915"/>
        <dbReference type="ChEBI" id="CHEBI:15377"/>
        <dbReference type="ChEBI" id="CHEBI:15378"/>
        <dbReference type="ChEBI" id="CHEBI:16526"/>
        <dbReference type="ChEBI" id="CHEBI:28938"/>
        <dbReference type="ChEBI" id="CHEBI:57762"/>
        <dbReference type="ChEBI" id="CHEBI:233497"/>
    </reaction>
    <physiologicalReaction direction="left-to-right" evidence="8">
        <dbReference type="Rhea" id="RHEA:83916"/>
    </physiologicalReaction>
</comment>
<comment type="catalytic activity">
    <reaction evidence="3">
        <text>N-carbamoyl-L-phenylalanine + H2O + 2 H(+) = L-phenylalanine + NH4(+) + CO2</text>
        <dbReference type="Rhea" id="RHEA:83911"/>
        <dbReference type="ChEBI" id="CHEBI:15377"/>
        <dbReference type="ChEBI" id="CHEBI:15378"/>
        <dbReference type="ChEBI" id="CHEBI:16526"/>
        <dbReference type="ChEBI" id="CHEBI:28938"/>
        <dbReference type="ChEBI" id="CHEBI:58095"/>
        <dbReference type="ChEBI" id="CHEBI:192544"/>
    </reaction>
    <physiologicalReaction direction="left-to-right" evidence="8">
        <dbReference type="Rhea" id="RHEA:83912"/>
    </physiologicalReaction>
</comment>
<comment type="cofactor">
    <cofactor evidence="3">
        <name>Mn(2+)</name>
        <dbReference type="ChEBI" id="CHEBI:29035"/>
    </cofactor>
    <cofactor evidence="3">
        <name>Ni(2+)</name>
        <dbReference type="ChEBI" id="CHEBI:49786"/>
    </cofactor>
    <cofactor evidence="3">
        <name>Co(2+)</name>
        <dbReference type="ChEBI" id="CHEBI:48828"/>
    </cofactor>
    <cofactor evidence="3">
        <name>Fe(2+)</name>
        <dbReference type="ChEBI" id="CHEBI:29033"/>
    </cofactor>
    <text evidence="3 4">Requires divalent metal cations for activity. Ni(2+), Mn(2+), Co(2+) and Fe(2+) are the most efficient in vitro (PubMed:16254442). Binds 2 divalent metal cations per subunit (PubMed:36342942).</text>
</comment>
<comment type="activity regulation">
    <text evidence="3">Strongly inhibited by Hg(2+), Cu(2+), Zn(2+), Pb(2+) and Fe(3+) ions, and slightly inhibited by Na(+) and K(+) ions. Beta-mercaptoethanol and 5,5'-dithiobis-(2-nitrobenzoic acid)(DTNB) cause 34% and 42% inhibition, respectively.</text>
</comment>
<comment type="biophysicochemical properties">
    <kinetics>
        <KM evidence="3">0.65 mM for N-carbamoyl-L-tryptophan (at 40 degrees Celsius and pH 8.0)</KM>
        <KM evidence="3">0.69 mM for N-carbamoyl-L-methionine (at 40 degrees Celsius and pH 8.0)</KM>
        <KM evidence="3">0.94 mM for N-carbamoyl-L-alanine (at 40 degrees Celsius and pH 8.0)</KM>
        <KM evidence="3">2.61 mM for N-carbamoyl-L-phenylalanine (at 40 degrees Celsius and pH 8.0)</KM>
        <KM evidence="3">4.8 mM for N-carbamoyl-L-tyrosine (at 40 degrees Celsius and pH 8.0)</KM>
        <KM evidence="3">4.91 mM for N-carbamoyl-L-cysteine (at 40 degrees Celsius and pH 8.0)</KM>
        <KM evidence="3">5.5 mM for N-acetyl-L-methionine (at 40 degrees Celsius and pH 8.0)</KM>
        <KM evidence="3">12.9 mM for N-formyl-L-methionine (at 40 degrees Celsius and pH 8.0)</KM>
        <KM evidence="3">34.47 mM for N-carbamoyl-L-valine (at 40 degrees Celsius and pH 8.0)</KM>
        <KM evidence="3">51.23 mM for N-carbamoyl-L-glutamic acid (at 40 degrees Celsius and pH 8.0)</KM>
        <text evidence="3">kcat is 91.66 sec(-1) with N-formyl-L-methionine as substrate (at 40 degrees Celsius and pH 8.0). kcat is 66.84 sec(-1) with N-acetyl-L-methionine as substrate (at 40 degrees Celsius and pH 8.0). kcat is 16.9 sec(-1) with N-carbamoyl-L-valine as substrate (at 40 degrees Celsius and pH 8.0). kcat is 14.46 sec(-1) with N-carbamoyl-L-methionine as substrate (at 40 degrees Celsius and pH 8.0). kcat is 13.55 sec(-1) with N-carbamoyl-L-cysteine as substrate (at 40 degrees Celsius and pH 8.0). kcat is 4.26 sec(-1) with N-carbamoyl-L-phenylalanine as substrate (at 40 degrees Celsius and pH 8.0). kcat is 2.59 sec(-1) with N-carbamoyl-L-alanine as substrate (at 40 degrees Celsius and pH 8.0). kcat is 1.52 sec(-1) with N-carbamoyl-L-glutamic acid as substrate (at 40 degrees Celsius and pH 8.0). kcat is 0.30 sec(-1) with N-carbamoyl-L-tyrosine as substrate (at 40 degrees Celsius and pH 8.0). kcat is 0.15 sec(-1) with N-carbamoyl-L-tryptophan as substrate (at 40 degrees Celsius and pH 8.0).</text>
    </kinetics>
    <phDependence>
        <text evidence="3">Optimum pH is 8.</text>
    </phDependence>
    <temperatureDependence>
        <text evidence="3">Optimum temperature is 60 degrees Celsius. Shows a low thermostability, retaining only 20% activity after incubation at 50 degrees Celsius for 30 minutes.</text>
    </temperatureDependence>
</comment>
<comment type="subunit">
    <text evidence="3">Homodimer.</text>
</comment>
<comment type="biotechnology">
    <text evidence="3">Could be used as a biocatalyst in the 'hydantoinase process', which allows the total conversion of D,L-5-monosubstituted hydantoins into optically pure D- or L-amino acids.</text>
</comment>
<comment type="similarity">
    <text evidence="7">Belongs to the peptidase M20 family.</text>
</comment>
<reference key="1">
    <citation type="journal article" date="2005" name="J. Mol. Microbiol. Biotechnol.">
        <title>Molecular cloning and biochemical characterization of L-N-carbamoylase from Sinorhizobium meliloti CECT4114.</title>
        <authorList>
            <person name="Martinez-Rodriguez S."/>
            <person name="Clemente-Jimenez J.M."/>
            <person name="Rodriguez-Vico F."/>
            <person name="Las Heras-Vazquez F.J."/>
        </authorList>
    </citation>
    <scope>NUCLEOTIDE SEQUENCE [GENOMIC DNA]</scope>
    <scope>FUNCTION</scope>
    <scope>CATALYTIC ACTIVITY</scope>
    <scope>BIOPHYSICOCHEMICAL PROPERTIES</scope>
    <scope>COFACTOR</scope>
    <scope>ACTIVITY REGULATION</scope>
    <scope>SUBSTRATE SPECIFICITY</scope>
    <scope>SUBUNIT</scope>
    <scope>BIOTECHNOLOGY</scope>
    <source>
        <strain>CECT 4114</strain>
    </source>
</reference>
<reference evidence="9 10" key="2">
    <citation type="journal article" date="2023" name="Angew. Chem. Int. Ed.">
        <title>Selecting Better Biocatalysts by Complementing Recoded Bacteria.</title>
        <authorList>
            <person name="Rubini R."/>
            <person name="Jansen S.C."/>
            <person name="Beekhuis H."/>
            <person name="Rozeboom H.J."/>
            <person name="Mayer C."/>
        </authorList>
    </citation>
    <scope>X-RAY CRYSTALLOGRAPHY (1.75 ANGSTROMS) OF WILD TYPE AND MUTANT GLY-217/CYS-329 IN COMPLEXES WITH N-CARBAMOYL-L-TYROSINE; D-ORNITHINE; FE(3+) AND ZN(2+)</scope>
    <scope>PROTEIN ENGINEERING</scope>
</reference>
<name>HYUC_RHIML</name>
<feature type="chain" id="PRO_0000439931" description="N-carbamoyl-L-amino-acid amidohydrolase">
    <location>
        <begin position="1"/>
        <end position="416"/>
    </location>
</feature>
<feature type="region of interest" description="Involved in dimerization" evidence="2">
    <location>
        <begin position="213"/>
        <end position="331"/>
    </location>
</feature>
<feature type="binding site" evidence="4 9 10">
    <location>
        <position position="87"/>
    </location>
    <ligand>
        <name>a divalent metal cation</name>
        <dbReference type="ChEBI" id="CHEBI:60240"/>
        <label>1</label>
    </ligand>
</feature>
<feature type="binding site" evidence="4 9 10">
    <location>
        <position position="98"/>
    </location>
    <ligand>
        <name>a divalent metal cation</name>
        <dbReference type="ChEBI" id="CHEBI:60240"/>
        <label>1</label>
    </ligand>
</feature>
<feature type="binding site" evidence="4 9 10">
    <location>
        <position position="98"/>
    </location>
    <ligand>
        <name>a divalent metal cation</name>
        <dbReference type="ChEBI" id="CHEBI:60240"/>
        <label>2</label>
    </ligand>
</feature>
<feature type="binding site" evidence="4 9 10">
    <location>
        <position position="133"/>
    </location>
    <ligand>
        <name>a divalent metal cation</name>
        <dbReference type="ChEBI" id="CHEBI:60240"/>
        <label>2</label>
    </ligand>
</feature>
<feature type="binding site" evidence="4 9 10">
    <location>
        <position position="194"/>
    </location>
    <ligand>
        <name>a divalent metal cation</name>
        <dbReference type="ChEBI" id="CHEBI:60240"/>
        <label>1</label>
    </ligand>
</feature>
<feature type="binding site" evidence="4 10">
    <location>
        <position position="197"/>
    </location>
    <ligand>
        <name>an N-carbamoyl-L-alpha-amino acid</name>
        <dbReference type="ChEBI" id="CHEBI:58865"/>
    </ligand>
</feature>
<feature type="binding site" evidence="4 10">
    <location>
        <position position="230"/>
    </location>
    <ligand>
        <name>an N-carbamoyl-L-alpha-amino acid</name>
        <dbReference type="ChEBI" id="CHEBI:58865"/>
    </ligand>
</feature>
<feature type="binding site" evidence="4 10">
    <location>
        <position position="279"/>
    </location>
    <ligand>
        <name>an N-carbamoyl-L-alpha-amino acid</name>
        <dbReference type="ChEBI" id="CHEBI:58865"/>
    </ligand>
</feature>
<feature type="binding site" evidence="4 10">
    <location>
        <position position="292"/>
    </location>
    <ligand>
        <name>an N-carbamoyl-L-alpha-amino acid</name>
        <dbReference type="ChEBI" id="CHEBI:58865"/>
    </ligand>
</feature>
<feature type="binding site" evidence="4 10">
    <location>
        <position position="361"/>
    </location>
    <ligand>
        <name>an N-carbamoyl-L-alpha-amino acid</name>
        <dbReference type="ChEBI" id="CHEBI:58865"/>
    </ligand>
</feature>
<feature type="binding site" evidence="4 9 10">
    <location>
        <position position="386"/>
    </location>
    <ligand>
        <name>a divalent metal cation</name>
        <dbReference type="ChEBI" id="CHEBI:60240"/>
        <label>2</label>
    </ligand>
</feature>
<feature type="site" description="Necessary for dimerization" evidence="2">
    <location>
        <position position="239"/>
    </location>
</feature>
<feature type="helix" evidence="11">
    <location>
        <begin position="12"/>
        <end position="22"/>
    </location>
</feature>
<feature type="strand" evidence="11">
    <location>
        <begin position="25"/>
        <end position="27"/>
    </location>
</feature>
<feature type="strand" evidence="11">
    <location>
        <begin position="29"/>
        <end position="33"/>
    </location>
</feature>
<feature type="helix" evidence="11">
    <location>
        <begin position="40"/>
        <end position="55"/>
    </location>
</feature>
<feature type="strand" evidence="11">
    <location>
        <begin position="59"/>
        <end position="63"/>
    </location>
</feature>
<feature type="strand" evidence="11">
    <location>
        <begin position="68"/>
        <end position="72"/>
    </location>
</feature>
<feature type="strand" evidence="11">
    <location>
        <begin position="82"/>
        <end position="86"/>
    </location>
</feature>
<feature type="helix" evidence="11">
    <location>
        <begin position="100"/>
        <end position="115"/>
    </location>
</feature>
<feature type="strand" evidence="11">
    <location>
        <begin position="119"/>
        <end position="122"/>
    </location>
</feature>
<feature type="strand" evidence="11">
    <location>
        <begin position="124"/>
        <end position="128"/>
    </location>
</feature>
<feature type="strand" evidence="11">
    <location>
        <begin position="135"/>
        <end position="141"/>
    </location>
</feature>
<feature type="helix" evidence="11">
    <location>
        <begin position="142"/>
        <end position="147"/>
    </location>
</feature>
<feature type="helix" evidence="11">
    <location>
        <begin position="153"/>
        <end position="158"/>
    </location>
</feature>
<feature type="helix" evidence="11">
    <location>
        <begin position="167"/>
        <end position="173"/>
    </location>
</feature>
<feature type="strand" evidence="11">
    <location>
        <begin position="188"/>
        <end position="195"/>
    </location>
</feature>
<feature type="strand" evidence="11">
    <location>
        <begin position="197"/>
        <end position="199"/>
    </location>
</feature>
<feature type="helix" evidence="11">
    <location>
        <begin position="200"/>
        <end position="204"/>
    </location>
</feature>
<feature type="strand" evidence="11">
    <location>
        <begin position="207"/>
        <end position="214"/>
    </location>
</feature>
<feature type="strand" evidence="11">
    <location>
        <begin position="216"/>
        <end position="225"/>
    </location>
</feature>
<feature type="turn" evidence="11">
    <location>
        <begin position="231"/>
        <end position="233"/>
    </location>
</feature>
<feature type="helix" evidence="11">
    <location>
        <begin position="236"/>
        <end position="238"/>
    </location>
</feature>
<feature type="helix" evidence="11">
    <location>
        <begin position="242"/>
        <end position="258"/>
    </location>
</feature>
<feature type="strand" evidence="11">
    <location>
        <begin position="265"/>
        <end position="275"/>
    </location>
</feature>
<feature type="strand" evidence="11">
    <location>
        <begin position="283"/>
        <end position="295"/>
    </location>
</feature>
<feature type="helix" evidence="11">
    <location>
        <begin position="296"/>
        <end position="316"/>
    </location>
</feature>
<feature type="strand" evidence="11">
    <location>
        <begin position="320"/>
        <end position="329"/>
    </location>
</feature>
<feature type="helix" evidence="11">
    <location>
        <begin position="336"/>
        <end position="349"/>
    </location>
</feature>
<feature type="strand" evidence="11">
    <location>
        <begin position="353"/>
        <end position="360"/>
    </location>
</feature>
<feature type="helix" evidence="11">
    <location>
        <begin position="363"/>
        <end position="370"/>
    </location>
</feature>
<feature type="strand" evidence="11">
    <location>
        <begin position="373"/>
        <end position="378"/>
    </location>
</feature>
<feature type="helix" evidence="11">
    <location>
        <begin position="381"/>
        <end position="383"/>
    </location>
</feature>
<feature type="helix" evidence="11">
    <location>
        <begin position="394"/>
        <end position="412"/>
    </location>
</feature>
<sequence>MAAPGENRRVNADRLWDSLMEMAKIGPGVAGGNNRQTLTDADGEGRRLFQSWCEEAGLSMGVDKMGTMFLTRPGTDPDALPVHIGSHLDTQPTGGKFDGVLGVLSGLEAVRTMNDLGIKTKHPIVVTNWTNEEGARFAPAMLASGVFAGVHTLEYAYARKDPEGKSFGDELKRIGWLGDEEVGARKMHAYFEYHIEQGPILEAENKQIGVVTHCQGLWWLEFTLTGREAHTGSTPMDMRVNAGLAMARILEMVQTVAMENQPGAVGGVGQMFFSPNSRNVLPGKVVFTVDIRSPDQAKLDGMRARIEAEAPKICERLGVGCSIEAVGHFDPVTFDPKLVETVRGAAEKLGYSHMNLVSGAGHDACWAAKVAPTTMIMCPCVGGLSHNEAEDISREWAAAGADVLFHAVLETAEIVE</sequence>
<proteinExistence type="evidence at protein level"/>
<evidence type="ECO:0000250" key="1">
    <source>
        <dbReference type="UniProtKB" id="Q01264"/>
    </source>
</evidence>
<evidence type="ECO:0000250" key="2">
    <source>
        <dbReference type="UniProtKB" id="Q53389"/>
    </source>
</evidence>
<evidence type="ECO:0000269" key="3">
    <source>
    </source>
</evidence>
<evidence type="ECO:0000269" key="4">
    <source>
    </source>
</evidence>
<evidence type="ECO:0000303" key="5">
    <source>
    </source>
</evidence>
<evidence type="ECO:0000303" key="6">
    <source>
    </source>
</evidence>
<evidence type="ECO:0000305" key="7"/>
<evidence type="ECO:0000305" key="8">
    <source>
    </source>
</evidence>
<evidence type="ECO:0007744" key="9">
    <source>
        <dbReference type="PDB" id="8APZ"/>
    </source>
</evidence>
<evidence type="ECO:0007744" key="10">
    <source>
        <dbReference type="PDB" id="8AQ0"/>
    </source>
</evidence>
<evidence type="ECO:0007829" key="11">
    <source>
        <dbReference type="PDB" id="8APZ"/>
    </source>
</evidence>
<dbReference type="EC" id="3.5.1.87" evidence="3"/>
<dbReference type="EMBL" id="AY646850">
    <property type="protein sequence ID" value="AAT66633.1"/>
    <property type="molecule type" value="Genomic_DNA"/>
</dbReference>
<dbReference type="RefSeq" id="WP_010969946.1">
    <property type="nucleotide sequence ID" value="NZ_WISY01000224.1"/>
</dbReference>
<dbReference type="PDB" id="8APZ">
    <property type="method" value="X-ray"/>
    <property type="resolution" value="1.75 A"/>
    <property type="chains" value="A/B=1-416"/>
</dbReference>
<dbReference type="PDB" id="8AQ0">
    <property type="method" value="X-ray"/>
    <property type="resolution" value="2.30 A"/>
    <property type="chains" value="A/B=1-416"/>
</dbReference>
<dbReference type="PDBsum" id="8APZ"/>
<dbReference type="PDBsum" id="8AQ0"/>
<dbReference type="SMR" id="Q6DTN4"/>
<dbReference type="STRING" id="382.DU99_13665"/>
<dbReference type="PATRIC" id="fig|382.52.peg.2781"/>
<dbReference type="OMA" id="IWPHGRW"/>
<dbReference type="GO" id="GO:0016813">
    <property type="term" value="F:hydrolase activity, acting on carbon-nitrogen (but not peptide) bonds, in linear amidines"/>
    <property type="evidence" value="ECO:0007669"/>
    <property type="project" value="InterPro"/>
</dbReference>
<dbReference type="GO" id="GO:0046872">
    <property type="term" value="F:metal ion binding"/>
    <property type="evidence" value="ECO:0007669"/>
    <property type="project" value="UniProtKB-KW"/>
</dbReference>
<dbReference type="GO" id="GO:0050538">
    <property type="term" value="F:N-carbamoyl-L-amino-acid hydrolase activity"/>
    <property type="evidence" value="ECO:0007669"/>
    <property type="project" value="UniProtKB-EC"/>
</dbReference>
<dbReference type="GO" id="GO:0008652">
    <property type="term" value="P:amino acid biosynthetic process"/>
    <property type="evidence" value="ECO:0007669"/>
    <property type="project" value="UniProtKB-KW"/>
</dbReference>
<dbReference type="CDD" id="cd03884">
    <property type="entry name" value="M20_bAS"/>
    <property type="match status" value="1"/>
</dbReference>
<dbReference type="Gene3D" id="3.30.70.360">
    <property type="match status" value="1"/>
</dbReference>
<dbReference type="Gene3D" id="3.40.630.10">
    <property type="entry name" value="Zn peptidases"/>
    <property type="match status" value="1"/>
</dbReference>
<dbReference type="InterPro" id="IPR010158">
    <property type="entry name" value="Amidase_Cbmase"/>
</dbReference>
<dbReference type="InterPro" id="IPR036264">
    <property type="entry name" value="Bact_exopeptidase_dim_dom"/>
</dbReference>
<dbReference type="InterPro" id="IPR002933">
    <property type="entry name" value="Peptidase_M20"/>
</dbReference>
<dbReference type="InterPro" id="IPR011650">
    <property type="entry name" value="Peptidase_M20_dimer"/>
</dbReference>
<dbReference type="NCBIfam" id="TIGR01879">
    <property type="entry name" value="hydantase"/>
    <property type="match status" value="1"/>
</dbReference>
<dbReference type="NCBIfam" id="NF006769">
    <property type="entry name" value="PRK09290.1-3"/>
    <property type="match status" value="1"/>
</dbReference>
<dbReference type="PANTHER" id="PTHR32494:SF5">
    <property type="entry name" value="ALLANTOATE AMIDOHYDROLASE"/>
    <property type="match status" value="1"/>
</dbReference>
<dbReference type="PANTHER" id="PTHR32494">
    <property type="entry name" value="ALLANTOATE DEIMINASE-RELATED"/>
    <property type="match status" value="1"/>
</dbReference>
<dbReference type="Pfam" id="PF07687">
    <property type="entry name" value="M20_dimer"/>
    <property type="match status" value="1"/>
</dbReference>
<dbReference type="Pfam" id="PF01546">
    <property type="entry name" value="Peptidase_M20"/>
    <property type="match status" value="1"/>
</dbReference>
<dbReference type="PIRSF" id="PIRSF001235">
    <property type="entry name" value="Amidase_carbamoylase"/>
    <property type="match status" value="1"/>
</dbReference>
<dbReference type="SUPFAM" id="SSF55031">
    <property type="entry name" value="Bacterial exopeptidase dimerisation domain"/>
    <property type="match status" value="1"/>
</dbReference>
<dbReference type="SUPFAM" id="SSF53187">
    <property type="entry name" value="Zn-dependent exopeptidases"/>
    <property type="match status" value="1"/>
</dbReference>
<gene>
    <name evidence="5" type="primary">hyuC</name>
</gene>
<organism>
    <name type="scientific">Rhizobium meliloti</name>
    <name type="common">Ensifer meliloti</name>
    <name type="synonym">Sinorhizobium meliloti</name>
    <dbReference type="NCBI Taxonomy" id="382"/>
    <lineage>
        <taxon>Bacteria</taxon>
        <taxon>Pseudomonadati</taxon>
        <taxon>Pseudomonadota</taxon>
        <taxon>Alphaproteobacteria</taxon>
        <taxon>Hyphomicrobiales</taxon>
        <taxon>Rhizobiaceae</taxon>
        <taxon>Sinorhizobium/Ensifer group</taxon>
        <taxon>Sinorhizobium</taxon>
    </lineage>
</organism>
<accession>Q6DTN4</accession>
<keyword id="KW-0002">3D-structure</keyword>
<keyword id="KW-0028">Amino-acid biosynthesis</keyword>
<keyword id="KW-0170">Cobalt</keyword>
<keyword id="KW-0378">Hydrolase</keyword>
<keyword id="KW-0408">Iron</keyword>
<keyword id="KW-0464">Manganese</keyword>
<keyword id="KW-0479">Metal-binding</keyword>
<keyword id="KW-0533">Nickel</keyword>
<protein>
    <recommendedName>
        <fullName evidence="5">N-carbamoyl-L-amino-acid amidohydrolase</fullName>
        <ecNumber evidence="3">3.5.1.87</ecNumber>
    </recommendedName>
    <alternativeName>
        <fullName evidence="1">Hydantoin utilization protein C</fullName>
    </alternativeName>
    <alternativeName>
        <fullName evidence="5">L-N-carbamoylase</fullName>
    </alternativeName>
    <alternativeName>
        <fullName evidence="6">SmLcar</fullName>
    </alternativeName>
</protein>